<name>RR14_NICTO</name>
<proteinExistence type="inferred from homology"/>
<accession>Q33C38</accession>
<sequence>MARKSLIQREKKRQKLEQKYHSIRRSSKKEISKVPSLSDKWEIYGKLQSPPRNSAPTRLHRRCFLTGRPRANYRDFGLSGHILREMVHACLLPGATRSSW</sequence>
<comment type="function">
    <text evidence="1">Binds 16S rRNA, required for the assembly of 30S particles.</text>
</comment>
<comment type="subunit">
    <text evidence="1">Part of the 30S ribosomal subunit.</text>
</comment>
<comment type="subcellular location">
    <subcellularLocation>
        <location>Plastid</location>
        <location>Chloroplast</location>
    </subcellularLocation>
</comment>
<comment type="similarity">
    <text evidence="1">Belongs to the universal ribosomal protein uS14 family.</text>
</comment>
<protein>
    <recommendedName>
        <fullName evidence="1">Small ribosomal subunit protein uS14c</fullName>
    </recommendedName>
    <alternativeName>
        <fullName evidence="3">30S ribosomal protein S14, chloroplastic</fullName>
    </alternativeName>
</protein>
<geneLocation type="chloroplast"/>
<reference key="1">
    <citation type="journal article" date="2006" name="Mol. Genet. Genomics">
        <title>The chloroplast genome of Nicotiana sylvestris and Nicotiana tomentosiformis: complete sequencing confirms that the Nicotiana sylvestris progenitor is the maternal genome donor of Nicotiana tabacum.</title>
        <authorList>
            <person name="Yukawa M."/>
            <person name="Tsudzuki T."/>
            <person name="Sugiura M."/>
        </authorList>
    </citation>
    <scope>NUCLEOTIDE SEQUENCE [LARGE SCALE GENOMIC DNA]</scope>
</reference>
<organism>
    <name type="scientific">Nicotiana tomentosiformis</name>
    <name type="common">Tobacco</name>
    <dbReference type="NCBI Taxonomy" id="4098"/>
    <lineage>
        <taxon>Eukaryota</taxon>
        <taxon>Viridiplantae</taxon>
        <taxon>Streptophyta</taxon>
        <taxon>Embryophyta</taxon>
        <taxon>Tracheophyta</taxon>
        <taxon>Spermatophyta</taxon>
        <taxon>Magnoliopsida</taxon>
        <taxon>eudicotyledons</taxon>
        <taxon>Gunneridae</taxon>
        <taxon>Pentapetalae</taxon>
        <taxon>asterids</taxon>
        <taxon>lamiids</taxon>
        <taxon>Solanales</taxon>
        <taxon>Solanaceae</taxon>
        <taxon>Nicotianoideae</taxon>
        <taxon>Nicotianeae</taxon>
        <taxon>Nicotiana</taxon>
    </lineage>
</organism>
<feature type="chain" id="PRO_0000276688" description="Small ribosomal subunit protein uS14c">
    <location>
        <begin position="1"/>
        <end position="100"/>
    </location>
</feature>
<feature type="region of interest" description="Disordered" evidence="2">
    <location>
        <begin position="1"/>
        <end position="31"/>
    </location>
</feature>
<evidence type="ECO:0000255" key="1">
    <source>
        <dbReference type="HAMAP-Rule" id="MF_00537"/>
    </source>
</evidence>
<evidence type="ECO:0000256" key="2">
    <source>
        <dbReference type="SAM" id="MobiDB-lite"/>
    </source>
</evidence>
<evidence type="ECO:0000305" key="3"/>
<gene>
    <name evidence="1" type="primary">rps14</name>
</gene>
<keyword id="KW-0150">Chloroplast</keyword>
<keyword id="KW-0934">Plastid</keyword>
<keyword id="KW-0687">Ribonucleoprotein</keyword>
<keyword id="KW-0689">Ribosomal protein</keyword>
<keyword id="KW-0694">RNA-binding</keyword>
<keyword id="KW-0699">rRNA-binding</keyword>
<dbReference type="EMBL" id="AB240139">
    <property type="protein sequence ID" value="BAE47997.1"/>
    <property type="molecule type" value="Genomic_DNA"/>
</dbReference>
<dbReference type="RefSeq" id="YP_398859.1">
    <property type="nucleotide sequence ID" value="NC_007602.1"/>
</dbReference>
<dbReference type="SMR" id="Q33C38"/>
<dbReference type="GeneID" id="3776383"/>
<dbReference type="KEGG" id="nto:3776383"/>
<dbReference type="OrthoDB" id="413436at2759"/>
<dbReference type="GO" id="GO:0009507">
    <property type="term" value="C:chloroplast"/>
    <property type="evidence" value="ECO:0007669"/>
    <property type="project" value="UniProtKB-SubCell"/>
</dbReference>
<dbReference type="GO" id="GO:0015935">
    <property type="term" value="C:small ribosomal subunit"/>
    <property type="evidence" value="ECO:0007669"/>
    <property type="project" value="TreeGrafter"/>
</dbReference>
<dbReference type="GO" id="GO:0019843">
    <property type="term" value="F:rRNA binding"/>
    <property type="evidence" value="ECO:0007669"/>
    <property type="project" value="UniProtKB-UniRule"/>
</dbReference>
<dbReference type="GO" id="GO:0003735">
    <property type="term" value="F:structural constituent of ribosome"/>
    <property type="evidence" value="ECO:0007669"/>
    <property type="project" value="InterPro"/>
</dbReference>
<dbReference type="GO" id="GO:0006412">
    <property type="term" value="P:translation"/>
    <property type="evidence" value="ECO:0007669"/>
    <property type="project" value="UniProtKB-UniRule"/>
</dbReference>
<dbReference type="FunFam" id="1.10.287.1480:FF:000001">
    <property type="entry name" value="30S ribosomal protein S14"/>
    <property type="match status" value="1"/>
</dbReference>
<dbReference type="Gene3D" id="1.10.287.1480">
    <property type="match status" value="1"/>
</dbReference>
<dbReference type="HAMAP" id="MF_00537">
    <property type="entry name" value="Ribosomal_uS14_1"/>
    <property type="match status" value="1"/>
</dbReference>
<dbReference type="InterPro" id="IPR001209">
    <property type="entry name" value="Ribosomal_uS14"/>
</dbReference>
<dbReference type="InterPro" id="IPR023036">
    <property type="entry name" value="Ribosomal_uS14_bac/plastid"/>
</dbReference>
<dbReference type="InterPro" id="IPR018271">
    <property type="entry name" value="Ribosomal_uS14_CS"/>
</dbReference>
<dbReference type="NCBIfam" id="NF006477">
    <property type="entry name" value="PRK08881.1"/>
    <property type="match status" value="1"/>
</dbReference>
<dbReference type="PANTHER" id="PTHR19836">
    <property type="entry name" value="30S RIBOSOMAL PROTEIN S14"/>
    <property type="match status" value="1"/>
</dbReference>
<dbReference type="PANTHER" id="PTHR19836:SF19">
    <property type="entry name" value="SMALL RIBOSOMAL SUBUNIT PROTEIN US14M"/>
    <property type="match status" value="1"/>
</dbReference>
<dbReference type="Pfam" id="PF00253">
    <property type="entry name" value="Ribosomal_S14"/>
    <property type="match status" value="1"/>
</dbReference>
<dbReference type="SUPFAM" id="SSF57716">
    <property type="entry name" value="Glucocorticoid receptor-like (DNA-binding domain)"/>
    <property type="match status" value="1"/>
</dbReference>
<dbReference type="PROSITE" id="PS00527">
    <property type="entry name" value="RIBOSOMAL_S14"/>
    <property type="match status" value="1"/>
</dbReference>